<accession>Q7N576</accession>
<gene>
    <name evidence="1" type="primary">luxD</name>
    <name type="ordered locus">plu2080</name>
</gene>
<keyword id="KW-0012">Acyltransferase</keyword>
<keyword id="KW-0455">Luminescence</keyword>
<keyword id="KW-1185">Reference proteome</keyword>
<keyword id="KW-0808">Transferase</keyword>
<sequence>MENKSKYKTIDHVLCVEGNKKIHVWETLPEENSPKRKNTIIIASGFARRMDHFAGLAEYLSRNGFHVIRYDSLHHVGLSSGTIDEFTMSIGKQSLLAVVDWLNTRKINNRGILASSLSARIVYASLSEINVSFLITAVGVVNLRYTLERALGFDYLSLPINELPNNLDFEGHKLGAEVFARDCLDFGWEDLTSTINSMMYLDIPFIAFTANNDNWVKQDEVITLLSNIRSNRCKIYSLLGSSHDLGENLVVLRNFYQSVTKAAIAMDNDRLDIDVDIIEPSFEHLTIATVNERRMKIEIENQAISLS</sequence>
<comment type="function">
    <text evidence="1">Acyl transferase is part of the fatty acid reductase system required for aldehyde biosynthesis; it produces fatty acids for the luminescent reaction.</text>
</comment>
<comment type="pathway">
    <text evidence="1">Lipid metabolism; fatty acid reduction for biolumincescence.</text>
</comment>
<comment type="similarity">
    <text evidence="1">Belongs to the LuxD family.</text>
</comment>
<name>LUXD_PHOLL</name>
<protein>
    <recommendedName>
        <fullName evidence="1">Acyl transferase</fullName>
        <shortName evidence="1">ACT</shortName>
        <ecNumber evidence="1">2.3.1.-</ecNumber>
    </recommendedName>
    <alternativeName>
        <fullName evidence="1">C14ACP-TE</fullName>
    </alternativeName>
    <alternativeName>
        <fullName evidence="1">Myristoyl-ACP-specific thioesterase</fullName>
    </alternativeName>
</protein>
<proteinExistence type="inferred from homology"/>
<reference key="1">
    <citation type="journal article" date="2003" name="Nat. Biotechnol.">
        <title>The genome sequence of the entomopathogenic bacterium Photorhabdus luminescens.</title>
        <authorList>
            <person name="Duchaud E."/>
            <person name="Rusniok C."/>
            <person name="Frangeul L."/>
            <person name="Buchrieser C."/>
            <person name="Givaudan A."/>
            <person name="Taourit S."/>
            <person name="Bocs S."/>
            <person name="Boursaux-Eude C."/>
            <person name="Chandler M."/>
            <person name="Charles J.-F."/>
            <person name="Dassa E."/>
            <person name="Derose R."/>
            <person name="Derzelle S."/>
            <person name="Freyssinet G."/>
            <person name="Gaudriault S."/>
            <person name="Medigue C."/>
            <person name="Lanois A."/>
            <person name="Powell K."/>
            <person name="Siguier P."/>
            <person name="Vincent R."/>
            <person name="Wingate V."/>
            <person name="Zouine M."/>
            <person name="Glaser P."/>
            <person name="Boemare N."/>
            <person name="Danchin A."/>
            <person name="Kunst F."/>
        </authorList>
    </citation>
    <scope>NUCLEOTIDE SEQUENCE [LARGE SCALE GENOMIC DNA]</scope>
    <source>
        <strain>DSM 15139 / CIP 105565 / TT01</strain>
    </source>
</reference>
<evidence type="ECO:0000255" key="1">
    <source>
        <dbReference type="HAMAP-Rule" id="MF_00774"/>
    </source>
</evidence>
<feature type="chain" id="PRO_0000220189" description="Acyl transferase">
    <location>
        <begin position="1"/>
        <end position="307"/>
    </location>
</feature>
<feature type="active site" description="Charge relay system" evidence="1">
    <location>
        <position position="116"/>
    </location>
</feature>
<feature type="active site" description="Charge relay system" evidence="1">
    <location>
        <position position="213"/>
    </location>
</feature>
<feature type="active site" description="Charge relay system" evidence="1">
    <location>
        <position position="243"/>
    </location>
</feature>
<dbReference type="EC" id="2.3.1.-" evidence="1"/>
<dbReference type="EMBL" id="BX571866">
    <property type="protein sequence ID" value="CAE14373.1"/>
    <property type="molecule type" value="Genomic_DNA"/>
</dbReference>
<dbReference type="RefSeq" id="WP_011146335.1">
    <property type="nucleotide sequence ID" value="NC_005126.1"/>
</dbReference>
<dbReference type="SMR" id="Q7N576"/>
<dbReference type="STRING" id="243265.plu2080"/>
<dbReference type="ESTHER" id="pholu-LUXD2">
    <property type="family name" value="Thioesterase_acyl-transferase"/>
</dbReference>
<dbReference type="GeneID" id="48848356"/>
<dbReference type="KEGG" id="plu:plu2080"/>
<dbReference type="eggNOG" id="COG1073">
    <property type="taxonomic scope" value="Bacteria"/>
</dbReference>
<dbReference type="HOGENOM" id="CLU_882365_0_0_6"/>
<dbReference type="OrthoDB" id="6458549at2"/>
<dbReference type="UniPathway" id="UPA00569"/>
<dbReference type="Proteomes" id="UP000002514">
    <property type="component" value="Chromosome"/>
</dbReference>
<dbReference type="GO" id="GO:0016747">
    <property type="term" value="F:acyltransferase activity, transferring groups other than amino-acyl groups"/>
    <property type="evidence" value="ECO:0007669"/>
    <property type="project" value="UniProtKB-UniRule"/>
</dbReference>
<dbReference type="GO" id="GO:0008218">
    <property type="term" value="P:bioluminescence"/>
    <property type="evidence" value="ECO:0007669"/>
    <property type="project" value="UniProtKB-UniRule"/>
</dbReference>
<dbReference type="GO" id="GO:0006631">
    <property type="term" value="P:fatty acid metabolic process"/>
    <property type="evidence" value="ECO:0007669"/>
    <property type="project" value="InterPro"/>
</dbReference>
<dbReference type="Gene3D" id="3.40.50.1820">
    <property type="entry name" value="alpha/beta hydrolase"/>
    <property type="match status" value="1"/>
</dbReference>
<dbReference type="HAMAP" id="MF_00774">
    <property type="entry name" value="LuxD"/>
    <property type="match status" value="1"/>
</dbReference>
<dbReference type="InterPro" id="IPR029058">
    <property type="entry name" value="AB_hydrolase_fold"/>
</dbReference>
<dbReference type="InterPro" id="IPR003157">
    <property type="entry name" value="LuxD"/>
</dbReference>
<dbReference type="NCBIfam" id="NF010127">
    <property type="entry name" value="PRK13604.1"/>
    <property type="match status" value="1"/>
</dbReference>
<dbReference type="Pfam" id="PF02273">
    <property type="entry name" value="Acyl_transf_2"/>
    <property type="match status" value="1"/>
</dbReference>
<dbReference type="PIRSF" id="PIRSF009416">
    <property type="entry name" value="LuxD"/>
    <property type="match status" value="1"/>
</dbReference>
<dbReference type="SUPFAM" id="SSF53474">
    <property type="entry name" value="alpha/beta-Hydrolases"/>
    <property type="match status" value="1"/>
</dbReference>
<organism>
    <name type="scientific">Photorhabdus laumondii subsp. laumondii (strain DSM 15139 / CIP 105565 / TT01)</name>
    <name type="common">Photorhabdus luminescens subsp. laumondii</name>
    <dbReference type="NCBI Taxonomy" id="243265"/>
    <lineage>
        <taxon>Bacteria</taxon>
        <taxon>Pseudomonadati</taxon>
        <taxon>Pseudomonadota</taxon>
        <taxon>Gammaproteobacteria</taxon>
        <taxon>Enterobacterales</taxon>
        <taxon>Morganellaceae</taxon>
        <taxon>Photorhabdus</taxon>
    </lineage>
</organism>